<comment type="function">
    <text>Transcriptional repressor of genes that require a bHLH protein for their transcription.</text>
</comment>
<comment type="subunit">
    <text evidence="1">Transcription repression requires formation of a complex with a corepressor protein of the Groucho/TLE family.</text>
</comment>
<comment type="subcellular location">
    <subcellularLocation>
        <location>Nucleus</location>
    </subcellularLocation>
</comment>
<comment type="domain">
    <text>Has a particular type of basic domain (presence of a helix-interrupting proline) that binds to the N-box (CACNAG), rather than the canonical E-box (CANNTG).</text>
</comment>
<comment type="domain">
    <text evidence="1">The C-terminal WRPW motif is a transcriptional repression domain necessary for the interaction with Groucho/TLE family members, transcriptional corepressors recruited to specific target DNA by Hairy-related proteins.</text>
</comment>
<accession>Q61657</accession>
<accession>O09083</accession>
<accession>O09150</accession>
<accession>Q8BTI2</accession>
<reference key="1">
    <citation type="journal article" date="1994" name="Biochem. Biophys. Res. Commun.">
        <title>Structure and chromosomal locus of the mouse gene encoding a cerebellar Purkinje cell-specific helix-loop-helix factor Hes-3.</title>
        <authorList>
            <person name="Sakagami T."/>
            <person name="Sakurada K."/>
            <person name="Sakai Y."/>
            <person name="Watanabe T."/>
            <person name="Nakanishi S."/>
            <person name="Kageyama R."/>
        </authorList>
    </citation>
    <scope>NUCLEOTIDE SEQUENCE [GENOMIC DNA]</scope>
    <source>
        <strain>129/SvJ</strain>
    </source>
</reference>
<reference key="2">
    <citation type="submission" date="1996-05" db="EMBL/GenBank/DDBJ databases">
        <authorList>
            <person name="Kageyama R."/>
        </authorList>
    </citation>
    <scope>NUCLEOTIDE SEQUENCE [GENOMIC DNA]</scope>
    <source>
        <strain>129/Sv</strain>
    </source>
</reference>
<reference key="3">
    <citation type="journal article" date="2005" name="Science">
        <title>The transcriptional landscape of the mammalian genome.</title>
        <authorList>
            <person name="Carninci P."/>
            <person name="Kasukawa T."/>
            <person name="Katayama S."/>
            <person name="Gough J."/>
            <person name="Frith M.C."/>
            <person name="Maeda N."/>
            <person name="Oyama R."/>
            <person name="Ravasi T."/>
            <person name="Lenhard B."/>
            <person name="Wells C."/>
            <person name="Kodzius R."/>
            <person name="Shimokawa K."/>
            <person name="Bajic V.B."/>
            <person name="Brenner S.E."/>
            <person name="Batalov S."/>
            <person name="Forrest A.R."/>
            <person name="Zavolan M."/>
            <person name="Davis M.J."/>
            <person name="Wilming L.G."/>
            <person name="Aidinis V."/>
            <person name="Allen J.E."/>
            <person name="Ambesi-Impiombato A."/>
            <person name="Apweiler R."/>
            <person name="Aturaliya R.N."/>
            <person name="Bailey T.L."/>
            <person name="Bansal M."/>
            <person name="Baxter L."/>
            <person name="Beisel K.W."/>
            <person name="Bersano T."/>
            <person name="Bono H."/>
            <person name="Chalk A.M."/>
            <person name="Chiu K.P."/>
            <person name="Choudhary V."/>
            <person name="Christoffels A."/>
            <person name="Clutterbuck D.R."/>
            <person name="Crowe M.L."/>
            <person name="Dalla E."/>
            <person name="Dalrymple B.P."/>
            <person name="de Bono B."/>
            <person name="Della Gatta G."/>
            <person name="di Bernardo D."/>
            <person name="Down T."/>
            <person name="Engstrom P."/>
            <person name="Fagiolini M."/>
            <person name="Faulkner G."/>
            <person name="Fletcher C.F."/>
            <person name="Fukushima T."/>
            <person name="Furuno M."/>
            <person name="Futaki S."/>
            <person name="Gariboldi M."/>
            <person name="Georgii-Hemming P."/>
            <person name="Gingeras T.R."/>
            <person name="Gojobori T."/>
            <person name="Green R.E."/>
            <person name="Gustincich S."/>
            <person name="Harbers M."/>
            <person name="Hayashi Y."/>
            <person name="Hensch T.K."/>
            <person name="Hirokawa N."/>
            <person name="Hill D."/>
            <person name="Huminiecki L."/>
            <person name="Iacono M."/>
            <person name="Ikeo K."/>
            <person name="Iwama A."/>
            <person name="Ishikawa T."/>
            <person name="Jakt M."/>
            <person name="Kanapin A."/>
            <person name="Katoh M."/>
            <person name="Kawasawa Y."/>
            <person name="Kelso J."/>
            <person name="Kitamura H."/>
            <person name="Kitano H."/>
            <person name="Kollias G."/>
            <person name="Krishnan S.P."/>
            <person name="Kruger A."/>
            <person name="Kummerfeld S.K."/>
            <person name="Kurochkin I.V."/>
            <person name="Lareau L.F."/>
            <person name="Lazarevic D."/>
            <person name="Lipovich L."/>
            <person name="Liu J."/>
            <person name="Liuni S."/>
            <person name="McWilliam S."/>
            <person name="Madan Babu M."/>
            <person name="Madera M."/>
            <person name="Marchionni L."/>
            <person name="Matsuda H."/>
            <person name="Matsuzawa S."/>
            <person name="Miki H."/>
            <person name="Mignone F."/>
            <person name="Miyake S."/>
            <person name="Morris K."/>
            <person name="Mottagui-Tabar S."/>
            <person name="Mulder N."/>
            <person name="Nakano N."/>
            <person name="Nakauchi H."/>
            <person name="Ng P."/>
            <person name="Nilsson R."/>
            <person name="Nishiguchi S."/>
            <person name="Nishikawa S."/>
            <person name="Nori F."/>
            <person name="Ohara O."/>
            <person name="Okazaki Y."/>
            <person name="Orlando V."/>
            <person name="Pang K.C."/>
            <person name="Pavan W.J."/>
            <person name="Pavesi G."/>
            <person name="Pesole G."/>
            <person name="Petrovsky N."/>
            <person name="Piazza S."/>
            <person name="Reed J."/>
            <person name="Reid J.F."/>
            <person name="Ring B.Z."/>
            <person name="Ringwald M."/>
            <person name="Rost B."/>
            <person name="Ruan Y."/>
            <person name="Salzberg S.L."/>
            <person name="Sandelin A."/>
            <person name="Schneider C."/>
            <person name="Schoenbach C."/>
            <person name="Sekiguchi K."/>
            <person name="Semple C.A."/>
            <person name="Seno S."/>
            <person name="Sessa L."/>
            <person name="Sheng Y."/>
            <person name="Shibata Y."/>
            <person name="Shimada H."/>
            <person name="Shimada K."/>
            <person name="Silva D."/>
            <person name="Sinclair B."/>
            <person name="Sperling S."/>
            <person name="Stupka E."/>
            <person name="Sugiura K."/>
            <person name="Sultana R."/>
            <person name="Takenaka Y."/>
            <person name="Taki K."/>
            <person name="Tammoja K."/>
            <person name="Tan S.L."/>
            <person name="Tang S."/>
            <person name="Taylor M.S."/>
            <person name="Tegner J."/>
            <person name="Teichmann S.A."/>
            <person name="Ueda H.R."/>
            <person name="van Nimwegen E."/>
            <person name="Verardo R."/>
            <person name="Wei C.L."/>
            <person name="Yagi K."/>
            <person name="Yamanishi H."/>
            <person name="Zabarovsky E."/>
            <person name="Zhu S."/>
            <person name="Zimmer A."/>
            <person name="Hide W."/>
            <person name="Bult C."/>
            <person name="Grimmond S.M."/>
            <person name="Teasdale R.D."/>
            <person name="Liu E.T."/>
            <person name="Brusic V."/>
            <person name="Quackenbush J."/>
            <person name="Wahlestedt C."/>
            <person name="Mattick J.S."/>
            <person name="Hume D.A."/>
            <person name="Kai C."/>
            <person name="Sasaki D."/>
            <person name="Tomaru Y."/>
            <person name="Fukuda S."/>
            <person name="Kanamori-Katayama M."/>
            <person name="Suzuki M."/>
            <person name="Aoki J."/>
            <person name="Arakawa T."/>
            <person name="Iida J."/>
            <person name="Imamura K."/>
            <person name="Itoh M."/>
            <person name="Kato T."/>
            <person name="Kawaji H."/>
            <person name="Kawagashira N."/>
            <person name="Kawashima T."/>
            <person name="Kojima M."/>
            <person name="Kondo S."/>
            <person name="Konno H."/>
            <person name="Nakano K."/>
            <person name="Ninomiya N."/>
            <person name="Nishio T."/>
            <person name="Okada M."/>
            <person name="Plessy C."/>
            <person name="Shibata K."/>
            <person name="Shiraki T."/>
            <person name="Suzuki S."/>
            <person name="Tagami M."/>
            <person name="Waki K."/>
            <person name="Watahiki A."/>
            <person name="Okamura-Oho Y."/>
            <person name="Suzuki H."/>
            <person name="Kawai J."/>
            <person name="Hayashizaki Y."/>
        </authorList>
    </citation>
    <scope>NUCLEOTIDE SEQUENCE [LARGE SCALE MRNA]</scope>
    <source>
        <strain>C57BL/6J</strain>
        <tissue>Cerebellum</tissue>
    </source>
</reference>
<reference key="4">
    <citation type="journal article" date="2004" name="Genome Res.">
        <title>The status, quality, and expansion of the NIH full-length cDNA project: the Mammalian Gene Collection (MGC).</title>
        <authorList>
            <consortium name="The MGC Project Team"/>
        </authorList>
    </citation>
    <scope>NUCLEOTIDE SEQUENCE [LARGE SCALE MRNA]</scope>
</reference>
<gene>
    <name type="primary">Hes3</name>
    <name type="synonym">Hes-3</name>
</gene>
<evidence type="ECO:0000250" key="1"/>
<evidence type="ECO:0000255" key="2">
    <source>
        <dbReference type="PROSITE-ProRule" id="PRU00380"/>
    </source>
</evidence>
<evidence type="ECO:0000255" key="3">
    <source>
        <dbReference type="PROSITE-ProRule" id="PRU00981"/>
    </source>
</evidence>
<evidence type="ECO:0000256" key="4">
    <source>
        <dbReference type="SAM" id="MobiDB-lite"/>
    </source>
</evidence>
<evidence type="ECO:0000305" key="5"/>
<sequence>MEKKRRARINVSLEQLRSLLERHYSHQIRKRKLEKADILELSVKYMRSLQNSLQGLWPVPSGVDYPSGFQGGLRGVSQRLRPGEGDSGLRCPLLLQRREGSTTDSANPQATSVLNPCLPAIWAPSRAAGGSHSPQSPLPLPGGLLESSTDVVAPHPASNCQAESTRPGFRVWRPW</sequence>
<organism>
    <name type="scientific">Mus musculus</name>
    <name type="common">Mouse</name>
    <dbReference type="NCBI Taxonomy" id="10090"/>
    <lineage>
        <taxon>Eukaryota</taxon>
        <taxon>Metazoa</taxon>
        <taxon>Chordata</taxon>
        <taxon>Craniata</taxon>
        <taxon>Vertebrata</taxon>
        <taxon>Euteleostomi</taxon>
        <taxon>Mammalia</taxon>
        <taxon>Eutheria</taxon>
        <taxon>Euarchontoglires</taxon>
        <taxon>Glires</taxon>
        <taxon>Rodentia</taxon>
        <taxon>Myomorpha</taxon>
        <taxon>Muroidea</taxon>
        <taxon>Muridae</taxon>
        <taxon>Murinae</taxon>
        <taxon>Mus</taxon>
        <taxon>Mus</taxon>
    </lineage>
</organism>
<feature type="chain" id="PRO_0000127209" description="Transcription factor HES-3">
    <location>
        <begin position="1"/>
        <end position="175"/>
    </location>
</feature>
<feature type="domain" description="bHLH" evidence="3">
    <location>
        <begin position="1"/>
        <end position="49"/>
    </location>
</feature>
<feature type="domain" description="Orange" evidence="2">
    <location>
        <begin position="65"/>
        <end position="98"/>
    </location>
</feature>
<feature type="region of interest" description="Disordered" evidence="4">
    <location>
        <begin position="126"/>
        <end position="166"/>
    </location>
</feature>
<feature type="short sequence motif" description="WRPW motif">
    <location>
        <begin position="172"/>
        <end position="175"/>
    </location>
</feature>
<feature type="compositionally biased region" description="Low complexity" evidence="4">
    <location>
        <begin position="129"/>
        <end position="148"/>
    </location>
</feature>
<feature type="sequence conflict" description="In Ref. 1 and 2." evidence="5" ref="1 2">
    <original>Q</original>
    <variation>H</variation>
    <location>
        <position position="70"/>
    </location>
</feature>
<feature type="sequence conflict" description="In Ref. 1 and 2." evidence="5" ref="1 2">
    <original>H</original>
    <variation>Q</variation>
    <location>
        <position position="155"/>
    </location>
</feature>
<dbReference type="EMBL" id="D32200">
    <property type="protein sequence ID" value="BAA06899.1"/>
    <property type="molecule type" value="Genomic_DNA"/>
</dbReference>
<dbReference type="EMBL" id="D85169">
    <property type="protein sequence ID" value="BAA19799.1"/>
    <property type="molecule type" value="Genomic_DNA"/>
</dbReference>
<dbReference type="EMBL" id="AK090218">
    <property type="protein sequence ID" value="BAC41140.1"/>
    <property type="molecule type" value="mRNA"/>
</dbReference>
<dbReference type="EMBL" id="BC116444">
    <property type="protein sequence ID" value="AAI16445.1"/>
    <property type="molecule type" value="mRNA"/>
</dbReference>
<dbReference type="CCDS" id="CCDS18997.1"/>
<dbReference type="RefSeq" id="NP_001390720.1">
    <property type="nucleotide sequence ID" value="NM_001403791.1"/>
</dbReference>
<dbReference type="RefSeq" id="NP_001390721.1">
    <property type="nucleotide sequence ID" value="NM_001403792.1"/>
</dbReference>
<dbReference type="RefSeq" id="NP_001390722.1">
    <property type="nucleotide sequence ID" value="NM_001403793.1"/>
</dbReference>
<dbReference type="RefSeq" id="NP_001390723.1">
    <property type="nucleotide sequence ID" value="NM_001403794.1"/>
</dbReference>
<dbReference type="RefSeq" id="NP_032263.2">
    <property type="nucleotide sequence ID" value="NM_008237.5"/>
</dbReference>
<dbReference type="RefSeq" id="XP_011248495.1">
    <property type="nucleotide sequence ID" value="XM_011250193.2"/>
</dbReference>
<dbReference type="RefSeq" id="XP_030109076.1">
    <property type="nucleotide sequence ID" value="XM_030253216.1"/>
</dbReference>
<dbReference type="SMR" id="Q61657"/>
<dbReference type="ELM" id="Q61657"/>
<dbReference type="FunCoup" id="Q61657">
    <property type="interactions" value="868"/>
</dbReference>
<dbReference type="STRING" id="10090.ENSMUSP00000092006"/>
<dbReference type="PaxDb" id="10090-ENSMUSP00000092006"/>
<dbReference type="Antibodypedia" id="62181">
    <property type="antibodies" value="52 antibodies from 13 providers"/>
</dbReference>
<dbReference type="DNASU" id="15207"/>
<dbReference type="Ensembl" id="ENSMUST00000094438.2">
    <property type="protein sequence ID" value="ENSMUSP00000092006.2"/>
    <property type="gene ID" value="ENSMUSG00000028946.8"/>
</dbReference>
<dbReference type="GeneID" id="15207"/>
<dbReference type="KEGG" id="mmu:15207"/>
<dbReference type="UCSC" id="uc008wac.1">
    <property type="organism name" value="mouse"/>
</dbReference>
<dbReference type="AGR" id="MGI:104877"/>
<dbReference type="CTD" id="390992"/>
<dbReference type="MGI" id="MGI:104877">
    <property type="gene designation" value="Hes3"/>
</dbReference>
<dbReference type="VEuPathDB" id="HostDB:ENSMUSG00000028946"/>
<dbReference type="eggNOG" id="KOG4304">
    <property type="taxonomic scope" value="Eukaryota"/>
</dbReference>
<dbReference type="GeneTree" id="ENSGT00730000111482"/>
<dbReference type="HOGENOM" id="CLU_068550_4_0_1"/>
<dbReference type="InParanoid" id="Q61657"/>
<dbReference type="OrthoDB" id="6085656at2759"/>
<dbReference type="PhylomeDB" id="Q61657"/>
<dbReference type="TreeFam" id="TF351373"/>
<dbReference type="BioGRID-ORCS" id="15207">
    <property type="hits" value="1 hit in 75 CRISPR screens"/>
</dbReference>
<dbReference type="PRO" id="PR:Q61657"/>
<dbReference type="Proteomes" id="UP000000589">
    <property type="component" value="Chromosome 4"/>
</dbReference>
<dbReference type="RNAct" id="Q61657">
    <property type="molecule type" value="protein"/>
</dbReference>
<dbReference type="Bgee" id="ENSMUSG00000028946">
    <property type="expression patterns" value="Expressed in spinal cord neural plate and 101 other cell types or tissues"/>
</dbReference>
<dbReference type="ExpressionAtlas" id="Q61657">
    <property type="expression patterns" value="baseline and differential"/>
</dbReference>
<dbReference type="GO" id="GO:0005634">
    <property type="term" value="C:nucleus"/>
    <property type="evidence" value="ECO:0007669"/>
    <property type="project" value="UniProtKB-SubCell"/>
</dbReference>
<dbReference type="GO" id="GO:0001227">
    <property type="term" value="F:DNA-binding transcription repressor activity, RNA polymerase II-specific"/>
    <property type="evidence" value="ECO:0000314"/>
    <property type="project" value="NTNU_SB"/>
</dbReference>
<dbReference type="GO" id="GO:0046983">
    <property type="term" value="F:protein dimerization activity"/>
    <property type="evidence" value="ECO:0007669"/>
    <property type="project" value="InterPro"/>
</dbReference>
<dbReference type="GO" id="GO:0000978">
    <property type="term" value="F:RNA polymerase II cis-regulatory region sequence-specific DNA binding"/>
    <property type="evidence" value="ECO:0000315"/>
    <property type="project" value="NTNU_SB"/>
</dbReference>
<dbReference type="GO" id="GO:0021575">
    <property type="term" value="P:hindbrain morphogenesis"/>
    <property type="evidence" value="ECO:0000316"/>
    <property type="project" value="MGI"/>
</dbReference>
<dbReference type="GO" id="GO:0001701">
    <property type="term" value="P:in utero embryonic development"/>
    <property type="evidence" value="ECO:0000316"/>
    <property type="project" value="MGI"/>
</dbReference>
<dbReference type="GO" id="GO:0030901">
    <property type="term" value="P:midbrain development"/>
    <property type="evidence" value="ECO:0000316"/>
    <property type="project" value="MGI"/>
</dbReference>
<dbReference type="GO" id="GO:0021555">
    <property type="term" value="P:midbrain-hindbrain boundary morphogenesis"/>
    <property type="evidence" value="ECO:0000316"/>
    <property type="project" value="MGI"/>
</dbReference>
<dbReference type="GO" id="GO:0000122">
    <property type="term" value="P:negative regulation of transcription by RNA polymerase II"/>
    <property type="evidence" value="ECO:0000314"/>
    <property type="project" value="NTNU_SB"/>
</dbReference>
<dbReference type="GO" id="GO:0021915">
    <property type="term" value="P:neural tube development"/>
    <property type="evidence" value="ECO:0000316"/>
    <property type="project" value="MGI"/>
</dbReference>
<dbReference type="GO" id="GO:0021557">
    <property type="term" value="P:oculomotor nerve development"/>
    <property type="evidence" value="ECO:0000316"/>
    <property type="project" value="MGI"/>
</dbReference>
<dbReference type="GO" id="GO:0045944">
    <property type="term" value="P:positive regulation of transcription by RNA polymerase II"/>
    <property type="evidence" value="ECO:0000316"/>
    <property type="project" value="MGI"/>
</dbReference>
<dbReference type="GO" id="GO:0050767">
    <property type="term" value="P:regulation of neurogenesis"/>
    <property type="evidence" value="ECO:0000316"/>
    <property type="project" value="MGI"/>
</dbReference>
<dbReference type="GO" id="GO:0060164">
    <property type="term" value="P:regulation of timing of neuron differentiation"/>
    <property type="evidence" value="ECO:0000316"/>
    <property type="project" value="MGI"/>
</dbReference>
<dbReference type="GO" id="GO:0006366">
    <property type="term" value="P:transcription by RNA polymerase II"/>
    <property type="evidence" value="ECO:0000316"/>
    <property type="project" value="MGI"/>
</dbReference>
<dbReference type="GO" id="GO:0021558">
    <property type="term" value="P:trochlear nerve development"/>
    <property type="evidence" value="ECO:0000316"/>
    <property type="project" value="MGI"/>
</dbReference>
<dbReference type="CDD" id="cd18933">
    <property type="entry name" value="bHLH-O_HES3"/>
    <property type="match status" value="1"/>
</dbReference>
<dbReference type="Gene3D" id="4.10.280.10">
    <property type="entry name" value="Helix-loop-helix DNA-binding domain"/>
    <property type="match status" value="1"/>
</dbReference>
<dbReference type="InterPro" id="IPR011598">
    <property type="entry name" value="bHLH_dom"/>
</dbReference>
<dbReference type="InterPro" id="IPR050370">
    <property type="entry name" value="HES_HEY"/>
</dbReference>
<dbReference type="InterPro" id="IPR036638">
    <property type="entry name" value="HLH_DNA-bd_sf"/>
</dbReference>
<dbReference type="InterPro" id="IPR003650">
    <property type="entry name" value="Orange_dom"/>
</dbReference>
<dbReference type="PANTHER" id="PTHR10985">
    <property type="entry name" value="BASIC HELIX-LOOP-HELIX TRANSCRIPTION FACTOR, HES-RELATED"/>
    <property type="match status" value="1"/>
</dbReference>
<dbReference type="Pfam" id="PF00010">
    <property type="entry name" value="HLH"/>
    <property type="match status" value="1"/>
</dbReference>
<dbReference type="SMART" id="SM00353">
    <property type="entry name" value="HLH"/>
    <property type="match status" value="1"/>
</dbReference>
<dbReference type="SUPFAM" id="SSF47459">
    <property type="entry name" value="HLH, helix-loop-helix DNA-binding domain"/>
    <property type="match status" value="1"/>
</dbReference>
<dbReference type="PROSITE" id="PS50888">
    <property type="entry name" value="BHLH"/>
    <property type="match status" value="1"/>
</dbReference>
<dbReference type="PROSITE" id="PS51054">
    <property type="entry name" value="ORANGE"/>
    <property type="match status" value="1"/>
</dbReference>
<proteinExistence type="evidence at transcript level"/>
<name>HES3_MOUSE</name>
<keyword id="KW-0238">DNA-binding</keyword>
<keyword id="KW-0539">Nucleus</keyword>
<keyword id="KW-1185">Reference proteome</keyword>
<keyword id="KW-0678">Repressor</keyword>
<keyword id="KW-0804">Transcription</keyword>
<keyword id="KW-0805">Transcription regulation</keyword>
<protein>
    <recommendedName>
        <fullName>Transcription factor HES-3</fullName>
    </recommendedName>
    <alternativeName>
        <fullName>Hairy and enhancer of split 3</fullName>
    </alternativeName>
</protein>